<comment type="function">
    <text evidence="1">Binds to the 50S ribosomal subunit and prevents its association with the 30S ribosomal subunit to form the 70S initiation complex.</text>
</comment>
<comment type="similarity">
    <text evidence="1">Belongs to the eIF-6 family.</text>
</comment>
<feature type="chain" id="PRO_0000259427" description="Translation initiation factor 6">
    <location>
        <begin position="1"/>
        <end position="226"/>
    </location>
</feature>
<organism>
    <name type="scientific">Haloquadratum walsbyi (strain DSM 16790 / HBSQ001)</name>
    <dbReference type="NCBI Taxonomy" id="362976"/>
    <lineage>
        <taxon>Archaea</taxon>
        <taxon>Methanobacteriati</taxon>
        <taxon>Methanobacteriota</taxon>
        <taxon>Stenosarchaea group</taxon>
        <taxon>Halobacteria</taxon>
        <taxon>Halobacteriales</taxon>
        <taxon>Haloferacaceae</taxon>
        <taxon>Haloquadratum</taxon>
    </lineage>
</organism>
<keyword id="KW-0396">Initiation factor</keyword>
<keyword id="KW-0648">Protein biosynthesis</keyword>
<keyword id="KW-1185">Reference proteome</keyword>
<evidence type="ECO:0000255" key="1">
    <source>
        <dbReference type="HAMAP-Rule" id="MF_00032"/>
    </source>
</evidence>
<reference key="1">
    <citation type="journal article" date="2006" name="BMC Genomics">
        <title>The genome of the square archaeon Haloquadratum walsbyi: life at the limits of water activity.</title>
        <authorList>
            <person name="Bolhuis H."/>
            <person name="Palm P."/>
            <person name="Wende A."/>
            <person name="Falb M."/>
            <person name="Rampp M."/>
            <person name="Rodriguez-Valera F."/>
            <person name="Pfeiffer F."/>
            <person name="Oesterhelt D."/>
        </authorList>
    </citation>
    <scope>NUCLEOTIDE SEQUENCE [LARGE SCALE GENOMIC DNA]</scope>
    <source>
        <strain>DSM 16790 / HBSQ001</strain>
    </source>
</reference>
<name>IF6_HALWD</name>
<dbReference type="EMBL" id="AM180088">
    <property type="protein sequence ID" value="CAJ53519.1"/>
    <property type="molecule type" value="Genomic_DNA"/>
</dbReference>
<dbReference type="RefSeq" id="WP_011572616.1">
    <property type="nucleotide sequence ID" value="NC_008212.1"/>
</dbReference>
<dbReference type="SMR" id="Q18EU8"/>
<dbReference type="STRING" id="362976.HQ_3422A"/>
<dbReference type="GeneID" id="4194787"/>
<dbReference type="KEGG" id="hwa:HQ_3422A"/>
<dbReference type="eggNOG" id="arCOG04176">
    <property type="taxonomic scope" value="Archaea"/>
</dbReference>
<dbReference type="HOGENOM" id="CLU_071894_1_0_2"/>
<dbReference type="Proteomes" id="UP000001975">
    <property type="component" value="Chromosome"/>
</dbReference>
<dbReference type="GO" id="GO:0043022">
    <property type="term" value="F:ribosome binding"/>
    <property type="evidence" value="ECO:0007669"/>
    <property type="project" value="InterPro"/>
</dbReference>
<dbReference type="GO" id="GO:0003743">
    <property type="term" value="F:translation initiation factor activity"/>
    <property type="evidence" value="ECO:0007669"/>
    <property type="project" value="UniProtKB-UniRule"/>
</dbReference>
<dbReference type="GO" id="GO:0042256">
    <property type="term" value="P:cytosolic ribosome assembly"/>
    <property type="evidence" value="ECO:0007669"/>
    <property type="project" value="InterPro"/>
</dbReference>
<dbReference type="Gene3D" id="3.75.10.10">
    <property type="entry name" value="L-arginine/glycine Amidinotransferase, Chain A"/>
    <property type="match status" value="1"/>
</dbReference>
<dbReference type="HAMAP" id="MF_00032">
    <property type="entry name" value="eIF_6"/>
    <property type="match status" value="1"/>
</dbReference>
<dbReference type="InterPro" id="IPR002769">
    <property type="entry name" value="eIF6"/>
</dbReference>
<dbReference type="NCBIfam" id="TIGR00323">
    <property type="entry name" value="eIF-6"/>
    <property type="match status" value="1"/>
</dbReference>
<dbReference type="NCBIfam" id="NF003128">
    <property type="entry name" value="PRK04046.1-4"/>
    <property type="match status" value="1"/>
</dbReference>
<dbReference type="PANTHER" id="PTHR10784">
    <property type="entry name" value="TRANSLATION INITIATION FACTOR 6"/>
    <property type="match status" value="1"/>
</dbReference>
<dbReference type="Pfam" id="PF01912">
    <property type="entry name" value="eIF-6"/>
    <property type="match status" value="1"/>
</dbReference>
<dbReference type="PIRSF" id="PIRSF006413">
    <property type="entry name" value="IF-6"/>
    <property type="match status" value="1"/>
</dbReference>
<dbReference type="SMART" id="SM00654">
    <property type="entry name" value="eIF6"/>
    <property type="match status" value="1"/>
</dbReference>
<dbReference type="SUPFAM" id="SSF55909">
    <property type="entry name" value="Pentein"/>
    <property type="match status" value="1"/>
</dbReference>
<accession>Q18EU8</accession>
<gene>
    <name evidence="1" type="primary">eif6</name>
    <name type="ordered locus">HQ_3422A</name>
</gene>
<protein>
    <recommendedName>
        <fullName evidence="1">Translation initiation factor 6</fullName>
        <shortName evidence="1">aIF-6</shortName>
    </recommendedName>
</protein>
<sequence length="226" mass="23284">MLRASFAGSPYVGVFARATDDVLLLRSDVDDDTADAMAAELDIPAVATTIGGSGTVGALATGNENGILVTSNVTMREKEAIETTASVSVTELPGRINAAGNVILANDYGAYVHPDLSTEAVESIESALNVPVARGKLADVRTVGTAAVATNRGVLCHPKAREPELEAIEDHLDVRADIGTVNYGAPLVGSGIVAGQTGYVVGEDTTGPELTRIEDTLGYLESITSE</sequence>
<proteinExistence type="inferred from homology"/>